<protein>
    <recommendedName>
        <fullName evidence="2">Synaptotagmin-1</fullName>
    </recommendedName>
    <alternativeName>
        <fullName evidence="9">Synaptotagmin I</fullName>
        <shortName>SytI</shortName>
    </alternativeName>
    <alternativeName>
        <fullName evidence="8">p65</fullName>
    </alternativeName>
</protein>
<dbReference type="EMBL" id="L05922">
    <property type="protein sequence ID" value="AAA87360.1"/>
    <property type="molecule type" value="mRNA"/>
</dbReference>
<dbReference type="PIR" id="A45486">
    <property type="entry name" value="A45486"/>
</dbReference>
<dbReference type="RefSeq" id="NP_776617.1">
    <property type="nucleotide sequence ID" value="NM_174192.3"/>
</dbReference>
<dbReference type="RefSeq" id="XP_005206087.1">
    <property type="nucleotide sequence ID" value="XM_005206030.5"/>
</dbReference>
<dbReference type="RefSeq" id="XP_059742079.1">
    <property type="nucleotide sequence ID" value="XM_059886096.1"/>
</dbReference>
<dbReference type="RefSeq" id="XP_059742080.1">
    <property type="nucleotide sequence ID" value="XM_059886097.1"/>
</dbReference>
<dbReference type="RefSeq" id="XP_059742081.1">
    <property type="nucleotide sequence ID" value="XM_059886098.1"/>
</dbReference>
<dbReference type="RefSeq" id="XP_059742082.1">
    <property type="nucleotide sequence ID" value="XM_059886099.1"/>
</dbReference>
<dbReference type="SMR" id="P48018"/>
<dbReference type="CORUM" id="P48018"/>
<dbReference type="FunCoup" id="P48018">
    <property type="interactions" value="1898"/>
</dbReference>
<dbReference type="IntAct" id="P48018">
    <property type="interactions" value="1"/>
</dbReference>
<dbReference type="MINT" id="P48018"/>
<dbReference type="STRING" id="9913.ENSBTAP00000008338"/>
<dbReference type="GlyCosmos" id="P48018">
    <property type="glycosylation" value="1 site, No reported glycans"/>
</dbReference>
<dbReference type="GlyGen" id="P48018">
    <property type="glycosylation" value="1 site"/>
</dbReference>
<dbReference type="iPTMnet" id="P48018"/>
<dbReference type="PaxDb" id="9913-ENSBTAP00000008338"/>
<dbReference type="Ensembl" id="ENSBTAT00000008338.7">
    <property type="protein sequence ID" value="ENSBTAP00000008338.7"/>
    <property type="gene ID" value="ENSBTAG00000034693.5"/>
</dbReference>
<dbReference type="GeneID" id="281511"/>
<dbReference type="KEGG" id="bta:281511"/>
<dbReference type="CTD" id="6857"/>
<dbReference type="VEuPathDB" id="HostDB:ENSBTAG00000034693"/>
<dbReference type="VGNC" id="VGNC:35535">
    <property type="gene designation" value="SYT1"/>
</dbReference>
<dbReference type="eggNOG" id="KOG1028">
    <property type="taxonomic scope" value="Eukaryota"/>
</dbReference>
<dbReference type="GeneTree" id="ENSGT00940000155394"/>
<dbReference type="HOGENOM" id="CLU_023008_0_1_1"/>
<dbReference type="InParanoid" id="P48018"/>
<dbReference type="OMA" id="AXKEEEL"/>
<dbReference type="OrthoDB" id="67700at2759"/>
<dbReference type="TreeFam" id="TF315600"/>
<dbReference type="Reactome" id="R-BTA-181429">
    <property type="pathway name" value="Serotonin Neurotransmitter Release Cycle"/>
</dbReference>
<dbReference type="Reactome" id="R-BTA-181430">
    <property type="pathway name" value="Norepinephrine Neurotransmitter Release Cycle"/>
</dbReference>
<dbReference type="Reactome" id="R-BTA-210500">
    <property type="pathway name" value="Glutamate Neurotransmitter Release Cycle"/>
</dbReference>
<dbReference type="Reactome" id="R-BTA-212676">
    <property type="pathway name" value="Dopamine Neurotransmitter Release Cycle"/>
</dbReference>
<dbReference type="Reactome" id="R-BTA-264642">
    <property type="pathway name" value="Acetylcholine Neurotransmitter Release Cycle"/>
</dbReference>
<dbReference type="Reactome" id="R-BTA-8856825">
    <property type="pathway name" value="Cargo recognition for clathrin-mediated endocytosis"/>
</dbReference>
<dbReference type="Reactome" id="R-BTA-8856828">
    <property type="pathway name" value="Clathrin-mediated endocytosis"/>
</dbReference>
<dbReference type="Reactome" id="R-BTA-888590">
    <property type="pathway name" value="GABA synthesis, release, reuptake and degradation"/>
</dbReference>
<dbReference type="Proteomes" id="UP000009136">
    <property type="component" value="Chromosome 5"/>
</dbReference>
<dbReference type="Bgee" id="ENSBTAG00000034693">
    <property type="expression patterns" value="Expressed in occipital lobe and 79 other cell types or tissues"/>
</dbReference>
<dbReference type="GO" id="GO:0030424">
    <property type="term" value="C:axon"/>
    <property type="evidence" value="ECO:0000318"/>
    <property type="project" value="GO_Central"/>
</dbReference>
<dbReference type="GO" id="GO:0042584">
    <property type="term" value="C:chromaffin granule membrane"/>
    <property type="evidence" value="ECO:0007669"/>
    <property type="project" value="UniProtKB-SubCell"/>
</dbReference>
<dbReference type="GO" id="GO:0030136">
    <property type="term" value="C:clathrin-coated vesicle"/>
    <property type="evidence" value="ECO:0000314"/>
    <property type="project" value="AgBase"/>
</dbReference>
<dbReference type="GO" id="GO:0031045">
    <property type="term" value="C:dense core granule"/>
    <property type="evidence" value="ECO:0000318"/>
    <property type="project" value="GO_Central"/>
</dbReference>
<dbReference type="GO" id="GO:0070382">
    <property type="term" value="C:exocytic vesicle"/>
    <property type="evidence" value="ECO:0000318"/>
    <property type="project" value="GO_Central"/>
</dbReference>
<dbReference type="GO" id="GO:0005886">
    <property type="term" value="C:plasma membrane"/>
    <property type="evidence" value="ECO:0000318"/>
    <property type="project" value="GO_Central"/>
</dbReference>
<dbReference type="GO" id="GO:0030672">
    <property type="term" value="C:synaptic vesicle membrane"/>
    <property type="evidence" value="ECO:0000318"/>
    <property type="project" value="GO_Central"/>
</dbReference>
<dbReference type="GO" id="GO:0061891">
    <property type="term" value="F:calcium ion sensor activity"/>
    <property type="evidence" value="ECO:0000318"/>
    <property type="project" value="GO_Central"/>
</dbReference>
<dbReference type="GO" id="GO:0005544">
    <property type="term" value="F:calcium-dependent phospholipid binding"/>
    <property type="evidence" value="ECO:0000318"/>
    <property type="project" value="GO_Central"/>
</dbReference>
<dbReference type="GO" id="GO:0005516">
    <property type="term" value="F:calmodulin binding"/>
    <property type="evidence" value="ECO:0007669"/>
    <property type="project" value="UniProtKB-KW"/>
</dbReference>
<dbReference type="GO" id="GO:0046872">
    <property type="term" value="F:metal ion binding"/>
    <property type="evidence" value="ECO:0007669"/>
    <property type="project" value="UniProtKB-KW"/>
</dbReference>
<dbReference type="GO" id="GO:0000149">
    <property type="term" value="F:SNARE binding"/>
    <property type="evidence" value="ECO:0000318"/>
    <property type="project" value="GO_Central"/>
</dbReference>
<dbReference type="GO" id="GO:0099502">
    <property type="term" value="P:calcium-dependent activation of synaptic vesicle fusion"/>
    <property type="evidence" value="ECO:0000318"/>
    <property type="project" value="GO_Central"/>
</dbReference>
<dbReference type="GO" id="GO:0030154">
    <property type="term" value="P:cell differentiation"/>
    <property type="evidence" value="ECO:0007669"/>
    <property type="project" value="UniProtKB-KW"/>
</dbReference>
<dbReference type="GO" id="GO:1903235">
    <property type="term" value="P:positive regulation of calcium ion-dependent exocytosis of neurotransmitter"/>
    <property type="evidence" value="ECO:0000250"/>
    <property type="project" value="UniProtKB"/>
</dbReference>
<dbReference type="GO" id="GO:0017158">
    <property type="term" value="P:regulation of calcium ion-dependent exocytosis"/>
    <property type="evidence" value="ECO:0000318"/>
    <property type="project" value="GO_Central"/>
</dbReference>
<dbReference type="GO" id="GO:2000300">
    <property type="term" value="P:regulation of synaptic vesicle exocytosis"/>
    <property type="evidence" value="ECO:0000318"/>
    <property type="project" value="GO_Central"/>
</dbReference>
<dbReference type="GO" id="GO:0016192">
    <property type="term" value="P:vesicle-mediated transport"/>
    <property type="evidence" value="ECO:0000318"/>
    <property type="project" value="GO_Central"/>
</dbReference>
<dbReference type="CDD" id="cd08385">
    <property type="entry name" value="C2A_Synaptotagmin-1-5-6-9-10"/>
    <property type="match status" value="1"/>
</dbReference>
<dbReference type="CDD" id="cd08402">
    <property type="entry name" value="C2B_Synaptotagmin-1"/>
    <property type="match status" value="1"/>
</dbReference>
<dbReference type="CDD" id="cd21963">
    <property type="entry name" value="Syt1_N"/>
    <property type="match status" value="1"/>
</dbReference>
<dbReference type="FunFam" id="2.60.40.150:FF:000007">
    <property type="entry name" value="Synaptotagmin 1"/>
    <property type="match status" value="1"/>
</dbReference>
<dbReference type="FunFam" id="2.60.40.150:FF:000016">
    <property type="entry name" value="Synaptotagmin 1"/>
    <property type="match status" value="1"/>
</dbReference>
<dbReference type="Gene3D" id="2.60.40.150">
    <property type="entry name" value="C2 domain"/>
    <property type="match status" value="2"/>
</dbReference>
<dbReference type="InterPro" id="IPR000008">
    <property type="entry name" value="C2_dom"/>
</dbReference>
<dbReference type="InterPro" id="IPR035892">
    <property type="entry name" value="C2_domain_sf"/>
</dbReference>
<dbReference type="InterPro" id="IPR001565">
    <property type="entry name" value="Synaptotagmin"/>
</dbReference>
<dbReference type="PANTHER" id="PTHR10024">
    <property type="entry name" value="SYNAPTOTAGMIN"/>
    <property type="match status" value="1"/>
</dbReference>
<dbReference type="PANTHER" id="PTHR10024:SF239">
    <property type="entry name" value="SYNAPTOTAGMIN-1"/>
    <property type="match status" value="1"/>
</dbReference>
<dbReference type="Pfam" id="PF00168">
    <property type="entry name" value="C2"/>
    <property type="match status" value="2"/>
</dbReference>
<dbReference type="PRINTS" id="PR00360">
    <property type="entry name" value="C2DOMAIN"/>
</dbReference>
<dbReference type="PRINTS" id="PR00399">
    <property type="entry name" value="SYNAPTOTAGMN"/>
</dbReference>
<dbReference type="SMART" id="SM00239">
    <property type="entry name" value="C2"/>
    <property type="match status" value="2"/>
</dbReference>
<dbReference type="SUPFAM" id="SSF49562">
    <property type="entry name" value="C2 domain (Calcium/lipid-binding domain, CaLB)"/>
    <property type="match status" value="2"/>
</dbReference>
<dbReference type="PROSITE" id="PS50004">
    <property type="entry name" value="C2"/>
    <property type="match status" value="2"/>
</dbReference>
<keyword id="KW-0106">Calcium</keyword>
<keyword id="KW-0112">Calmodulin-binding</keyword>
<keyword id="KW-0963">Cytoplasm</keyword>
<keyword id="KW-0968">Cytoplasmic vesicle</keyword>
<keyword id="KW-0221">Differentiation</keyword>
<keyword id="KW-0903">Direct protein sequencing</keyword>
<keyword id="KW-0325">Glycoprotein</keyword>
<keyword id="KW-0449">Lipoprotein</keyword>
<keyword id="KW-0472">Membrane</keyword>
<keyword id="KW-0479">Metal-binding</keyword>
<keyword id="KW-0564">Palmitate</keyword>
<keyword id="KW-0597">Phosphoprotein</keyword>
<keyword id="KW-1185">Reference proteome</keyword>
<keyword id="KW-0677">Repeat</keyword>
<keyword id="KW-0770">Synapse</keyword>
<keyword id="KW-0812">Transmembrane</keyword>
<keyword id="KW-1133">Transmembrane helix</keyword>
<reference key="1">
    <citation type="journal article" date="1993" name="J. Biol. Chem.">
        <title>Phosphorylation of synaptotagmin I by casein kinase II.</title>
        <authorList>
            <person name="Davletov B."/>
            <person name="Sontag J.M."/>
            <person name="Hata Y."/>
            <person name="Petrenko A.G."/>
            <person name="Fykse E.M."/>
            <person name="Jahn R."/>
            <person name="Suedhof T.C."/>
        </authorList>
    </citation>
    <scope>NUCLEOTIDE SEQUENCE [MRNA]</scope>
    <source>
        <tissue>Brain</tissue>
    </source>
</reference>
<reference key="2">
    <citation type="journal article" date="1991" name="Biochem. J.">
        <title>Glycosylation and transmembrane topography of bovine chromaffin granule p65.</title>
        <authorList>
            <person name="Tugal H.B."/>
            <person name="van Leeuwen F."/>
            <person name="Apps D.K."/>
            <person name="Haywood J."/>
            <person name="Phillips J.H."/>
        </authorList>
    </citation>
    <scope>PROTEIN SEQUENCE OF 113-132</scope>
    <scope>INTERACTION WITH CALMODULIN</scope>
    <scope>GLYCOSYLATION</scope>
    <source>
        <tissue>Adrenal gland</tissue>
    </source>
</reference>
<proteinExistence type="evidence at protein level"/>
<sequence>MVSESHHEALAAPPVTTVATVLPHNATEPASPGEGKEDAFSKLKEKFMNELHKIPLPPWALIAIAIVAVLLVLTCCFCICKKCLFKKKNKKKGKEKGGKNAINMKDVKDLGKTMKDQALKDDDAETGLTDGEEKEEPKEEEKLGKLQYSLDYDFQNNQLLVGIIQAAELPALDMGGTSDPYVKVFLLPDKKKKFETKVHRKTLNPVFNEQFTFKVPYSELGGKTLVMAVYDFDRFSKHDIIGEFKVPMNTVDFGHVTEEWRDLQSAEKEEQEKLGDICFSLRYVPTAGKLTVVILEAKNLKKMDVGGLSDPYVKIHLMQNGKRLKKKKTTIKKNTLNPYYNESFSFEVPFEQIQKVQVVVTVLDYDKIGKNDAIGKVFVGYNSTGAELRHWSDMLANPRRPIAQWHTLQVEEEVDAMLAVKK</sequence>
<evidence type="ECO:0000250" key="1">
    <source>
        <dbReference type="UniProtKB" id="P21579"/>
    </source>
</evidence>
<evidence type="ECO:0000250" key="2">
    <source>
        <dbReference type="UniProtKB" id="P21707"/>
    </source>
</evidence>
<evidence type="ECO:0000250" key="3">
    <source>
        <dbReference type="UniProtKB" id="P46096"/>
    </source>
</evidence>
<evidence type="ECO:0000255" key="4"/>
<evidence type="ECO:0000255" key="5">
    <source>
        <dbReference type="PROSITE-ProRule" id="PRU00041"/>
    </source>
</evidence>
<evidence type="ECO:0000256" key="6">
    <source>
        <dbReference type="SAM" id="MobiDB-lite"/>
    </source>
</evidence>
<evidence type="ECO:0000269" key="7">
    <source>
    </source>
</evidence>
<evidence type="ECO:0000303" key="8">
    <source>
    </source>
</evidence>
<evidence type="ECO:0000303" key="9">
    <source>
    </source>
</evidence>
<evidence type="ECO:0000305" key="10"/>
<gene>
    <name evidence="1" type="primary">SYT1</name>
</gene>
<organism>
    <name type="scientific">Bos taurus</name>
    <name type="common">Bovine</name>
    <dbReference type="NCBI Taxonomy" id="9913"/>
    <lineage>
        <taxon>Eukaryota</taxon>
        <taxon>Metazoa</taxon>
        <taxon>Chordata</taxon>
        <taxon>Craniata</taxon>
        <taxon>Vertebrata</taxon>
        <taxon>Euteleostomi</taxon>
        <taxon>Mammalia</taxon>
        <taxon>Eutheria</taxon>
        <taxon>Laurasiatheria</taxon>
        <taxon>Artiodactyla</taxon>
        <taxon>Ruminantia</taxon>
        <taxon>Pecora</taxon>
        <taxon>Bovidae</taxon>
        <taxon>Bovinae</taxon>
        <taxon>Bos</taxon>
    </lineage>
</organism>
<comment type="function">
    <text evidence="1 3">Calcium sensor that participates in triggering neurotransmitter release at the synapse (By similarity). May have a regulatory role in the membrane interactions during trafficking of synaptic vesicles at the active zone of the synapse (By similarity). It binds acidic phospholipids with a specificity that requires the presence of both an acidic head group and a diacyl backbone. A Ca(2+)-dependent interaction between synaptotagmin and putative receptors for activated protein kinase C has also been reported. It can bind to at least three additional proteins in a Ca(2+)-independent manner; these are neurexins, syntaxin and AP2. Plays a role in dendrite formation by melanocytes (By similarity).</text>
</comment>
<comment type="cofactor">
    <cofactor evidence="5">
        <name>Ca(2+)</name>
        <dbReference type="ChEBI" id="CHEBI:29108"/>
    </cofactor>
    <text evidence="2">Binds 3 Ca(2+) ions per subunit. The ions are bound to the C2 domains.</text>
</comment>
<comment type="subunit">
    <text evidence="1 2 3 7 10">Homotetramer (Probable). Heterodimer; heterodimerizes with SYT2 in presence of calcium (By similarity). Interacts with SCAMP5 (By similarity). Interacts with STON2 (By similarity). Forms a complex with SV2B, syntaxin 1 and SNAP25 (By similarity). Interacts with SV2A, SV2B and SV2C (By similarity). Interacts with RIMS1 (By similarity). Interacts with PRRT2 (By similarity). Interacts with DNAJC5 in a phosphorylation-dependent manner (By similarity). Interacts (via N-terminus) with RAB3A (By similarity). Interacts with SYT12 (By similarity). Interacts with calmodulin (PubMed:1719959). Interacts with DNM1 (via C-terminal proline-rich domain (PRD)); this interaction facilitates vesicle fission during clathrin-mediated endocytosis (CME) (By similarity).</text>
</comment>
<comment type="subcellular location">
    <subcellularLocation>
        <location evidence="2">Cytoplasmic vesicle</location>
        <location evidence="2">Secretory vesicle membrane</location>
        <topology evidence="4">Single-pass membrane protein</topology>
    </subcellularLocation>
    <subcellularLocation>
        <location evidence="2">Cytoplasmic vesicle</location>
        <location evidence="2">Secretory vesicle</location>
        <location evidence="2">Synaptic vesicle membrane</location>
        <topology evidence="2">Single-pass membrane protein</topology>
    </subcellularLocation>
    <subcellularLocation>
        <location evidence="2">Cytoplasmic vesicle</location>
        <location evidence="2">Secretory vesicle</location>
        <location evidence="2">Chromaffin granule membrane</location>
        <topology evidence="2">Single-pass membrane protein</topology>
    </subcellularLocation>
    <subcellularLocation>
        <location evidence="2">Cytoplasm</location>
    </subcellularLocation>
</comment>
<comment type="domain">
    <text evidence="2">The first C2 domain mediates Ca(2+)-dependent phospholipid binding.</text>
</comment>
<comment type="domain">
    <text evidence="2">The second C2 domain mediates interaction with SV2A and probably with STN2.</text>
</comment>
<comment type="PTM">
    <text evidence="2">Glycosylated.</text>
</comment>
<comment type="similarity">
    <text evidence="10">Belongs to the synaptotagmin family.</text>
</comment>
<name>SYT1_BOVIN</name>
<feature type="chain" id="PRO_0000183935" description="Synaptotagmin-1">
    <location>
        <begin position="1"/>
        <end position="422"/>
    </location>
</feature>
<feature type="topological domain" description="Vesicular" evidence="4">
    <location>
        <begin position="1"/>
        <end position="57"/>
    </location>
</feature>
<feature type="transmembrane region" description="Helical" evidence="4">
    <location>
        <begin position="58"/>
        <end position="80"/>
    </location>
</feature>
<feature type="topological domain" description="Cytoplasmic" evidence="4">
    <location>
        <begin position="81"/>
        <end position="422"/>
    </location>
</feature>
<feature type="domain" description="C2 1" evidence="5">
    <location>
        <begin position="142"/>
        <end position="261"/>
    </location>
</feature>
<feature type="domain" description="C2 2" evidence="5">
    <location>
        <begin position="273"/>
        <end position="406"/>
    </location>
</feature>
<feature type="region of interest" description="Disordered" evidence="6">
    <location>
        <begin position="113"/>
        <end position="142"/>
    </location>
</feature>
<feature type="region of interest" description="Phospholipid binding" evidence="10">
    <location>
        <begin position="136"/>
        <end position="382"/>
    </location>
</feature>
<feature type="compositionally biased region" description="Acidic residues" evidence="6">
    <location>
        <begin position="122"/>
        <end position="134"/>
    </location>
</feature>
<feature type="binding site" evidence="5">
    <location>
        <position position="172"/>
    </location>
    <ligand>
        <name>Ca(2+)</name>
        <dbReference type="ChEBI" id="CHEBI:29108"/>
        <label>2</label>
    </ligand>
</feature>
<feature type="binding site" evidence="5">
    <location>
        <position position="173"/>
    </location>
    <ligand>
        <name>Ca(2+)</name>
        <dbReference type="ChEBI" id="CHEBI:29108"/>
        <label>1</label>
    </ligand>
</feature>
<feature type="binding site" evidence="5">
    <location>
        <position position="173"/>
    </location>
    <ligand>
        <name>Ca(2+)</name>
        <dbReference type="ChEBI" id="CHEBI:29108"/>
        <label>2</label>
    </ligand>
</feature>
<feature type="binding site" evidence="5">
    <location>
        <position position="179"/>
    </location>
    <ligand>
        <name>Ca(2+)</name>
        <dbReference type="ChEBI" id="CHEBI:29108"/>
        <label>1</label>
    </ligand>
</feature>
<feature type="binding site" evidence="5">
    <location>
        <position position="231"/>
    </location>
    <ligand>
        <name>Ca(2+)</name>
        <dbReference type="ChEBI" id="CHEBI:29108"/>
        <label>1</label>
    </ligand>
</feature>
<feature type="binding site" evidence="5">
    <location>
        <position position="231"/>
    </location>
    <ligand>
        <name>Ca(2+)</name>
        <dbReference type="ChEBI" id="CHEBI:29108"/>
        <label>2</label>
    </ligand>
</feature>
<feature type="binding site" evidence="5">
    <location>
        <position position="232"/>
    </location>
    <ligand>
        <name>Ca(2+)</name>
        <dbReference type="ChEBI" id="CHEBI:29108"/>
        <label>1</label>
    </ligand>
</feature>
<feature type="binding site" evidence="5">
    <location>
        <position position="233"/>
    </location>
    <ligand>
        <name>Ca(2+)</name>
        <dbReference type="ChEBI" id="CHEBI:29108"/>
        <label>1</label>
    </ligand>
</feature>
<feature type="binding site" evidence="5">
    <location>
        <position position="233"/>
    </location>
    <ligand>
        <name>Ca(2+)</name>
        <dbReference type="ChEBI" id="CHEBI:29108"/>
        <label>2</label>
    </ligand>
</feature>
<feature type="binding site" evidence="5">
    <location>
        <position position="233"/>
    </location>
    <ligand>
        <name>Ca(2+)</name>
        <dbReference type="ChEBI" id="CHEBI:29108"/>
        <label>3</label>
    </ligand>
</feature>
<feature type="binding site" evidence="5">
    <location>
        <position position="236"/>
    </location>
    <ligand>
        <name>Ca(2+)</name>
        <dbReference type="ChEBI" id="CHEBI:29108"/>
        <label>3</label>
    </ligand>
</feature>
<feature type="binding site" evidence="5">
    <location>
        <position position="237"/>
    </location>
    <ligand>
        <name>Ca(2+)</name>
        <dbReference type="ChEBI" id="CHEBI:29108"/>
        <label>3</label>
    </ligand>
</feature>
<feature type="binding site" evidence="5">
    <location>
        <position position="239"/>
    </location>
    <ligand>
        <name>Ca(2+)</name>
        <dbReference type="ChEBI" id="CHEBI:29108"/>
        <label>2</label>
    </ligand>
</feature>
<feature type="binding site" evidence="5">
    <location>
        <position position="239"/>
    </location>
    <ligand>
        <name>Ca(2+)</name>
        <dbReference type="ChEBI" id="CHEBI:29108"/>
        <label>3</label>
    </ligand>
</feature>
<feature type="binding site" evidence="5">
    <location>
        <position position="304"/>
    </location>
    <ligand>
        <name>Ca(2+)</name>
        <dbReference type="ChEBI" id="CHEBI:29108"/>
        <label>4</label>
    </ligand>
</feature>
<feature type="binding site" evidence="5">
    <location>
        <position position="304"/>
    </location>
    <ligand>
        <name>Ca(2+)</name>
        <dbReference type="ChEBI" id="CHEBI:29108"/>
        <label>5</label>
    </ligand>
</feature>
<feature type="binding site" evidence="5">
    <location>
        <position position="310"/>
    </location>
    <ligand>
        <name>Ca(2+)</name>
        <dbReference type="ChEBI" id="CHEBI:29108"/>
        <label>4</label>
    </ligand>
</feature>
<feature type="binding site" evidence="5">
    <location>
        <position position="364"/>
    </location>
    <ligand>
        <name>Ca(2+)</name>
        <dbReference type="ChEBI" id="CHEBI:29108"/>
        <label>4</label>
    </ligand>
</feature>
<feature type="binding site" evidence="5">
    <location>
        <position position="364"/>
    </location>
    <ligand>
        <name>Ca(2+)</name>
        <dbReference type="ChEBI" id="CHEBI:29108"/>
        <label>5</label>
    </ligand>
</feature>
<feature type="binding site" evidence="5">
    <location>
        <position position="366"/>
    </location>
    <ligand>
        <name>Ca(2+)</name>
        <dbReference type="ChEBI" id="CHEBI:29108"/>
        <label>4</label>
    </ligand>
</feature>
<feature type="binding site" evidence="5">
    <location>
        <position position="366"/>
    </location>
    <ligand>
        <name>Ca(2+)</name>
        <dbReference type="ChEBI" id="CHEBI:29108"/>
        <label>5</label>
    </ligand>
</feature>
<feature type="binding site" evidence="5">
    <location>
        <position position="372"/>
    </location>
    <ligand>
        <name>Ca(2+)</name>
        <dbReference type="ChEBI" id="CHEBI:29108"/>
        <label>5</label>
    </ligand>
</feature>
<feature type="modified residue" description="Phosphothreonine" evidence="1">
    <location>
        <position position="129"/>
    </location>
</feature>
<feature type="modified residue" description="Phosphotyrosine" evidence="3">
    <location>
        <position position="230"/>
    </location>
</feature>
<feature type="modified residue" description="Phosphoserine" evidence="3">
    <location>
        <position position="265"/>
    </location>
</feature>
<feature type="modified residue" description="Phosphoserine" evidence="2">
    <location>
        <position position="343"/>
    </location>
</feature>
<feature type="modified residue" description="Phosphoserine" evidence="2">
    <location>
        <position position="345"/>
    </location>
</feature>
<feature type="lipid moiety-binding region" description="S-palmitoyl cysteine" evidence="2">
    <location>
        <position position="75"/>
    </location>
</feature>
<feature type="lipid moiety-binding region" description="S-palmitoyl cysteine" evidence="2">
    <location>
        <position position="76"/>
    </location>
</feature>
<feature type="lipid moiety-binding region" description="S-palmitoyl cysteine" evidence="2">
    <location>
        <position position="78"/>
    </location>
</feature>
<feature type="lipid moiety-binding region" description="S-palmitoyl cysteine" evidence="2">
    <location>
        <position position="80"/>
    </location>
</feature>
<feature type="lipid moiety-binding region" description="S-palmitoyl cysteine" evidence="2">
    <location>
        <position position="83"/>
    </location>
</feature>
<feature type="glycosylation site" description="N-linked (GlcNAc...) asparagine" evidence="4">
    <location>
        <position position="25"/>
    </location>
</feature>
<accession>P48018</accession>